<proteinExistence type="inferred from homology"/>
<name>RS8_SHELP</name>
<dbReference type="EMBL" id="CP000606">
    <property type="protein sequence ID" value="ABO22044.1"/>
    <property type="molecule type" value="Genomic_DNA"/>
</dbReference>
<dbReference type="RefSeq" id="WP_011863980.1">
    <property type="nucleotide sequence ID" value="NC_009092.1"/>
</dbReference>
<dbReference type="SMR" id="A3Q996"/>
<dbReference type="STRING" id="323850.Shew_0172"/>
<dbReference type="KEGG" id="slo:Shew_0172"/>
<dbReference type="eggNOG" id="COG0096">
    <property type="taxonomic scope" value="Bacteria"/>
</dbReference>
<dbReference type="HOGENOM" id="CLU_098428_0_0_6"/>
<dbReference type="OrthoDB" id="9802617at2"/>
<dbReference type="Proteomes" id="UP000001558">
    <property type="component" value="Chromosome"/>
</dbReference>
<dbReference type="GO" id="GO:1990904">
    <property type="term" value="C:ribonucleoprotein complex"/>
    <property type="evidence" value="ECO:0007669"/>
    <property type="project" value="UniProtKB-KW"/>
</dbReference>
<dbReference type="GO" id="GO:0005840">
    <property type="term" value="C:ribosome"/>
    <property type="evidence" value="ECO:0007669"/>
    <property type="project" value="UniProtKB-KW"/>
</dbReference>
<dbReference type="GO" id="GO:0019843">
    <property type="term" value="F:rRNA binding"/>
    <property type="evidence" value="ECO:0007669"/>
    <property type="project" value="UniProtKB-UniRule"/>
</dbReference>
<dbReference type="GO" id="GO:0003735">
    <property type="term" value="F:structural constituent of ribosome"/>
    <property type="evidence" value="ECO:0007669"/>
    <property type="project" value="InterPro"/>
</dbReference>
<dbReference type="GO" id="GO:0006412">
    <property type="term" value="P:translation"/>
    <property type="evidence" value="ECO:0007669"/>
    <property type="project" value="UniProtKB-UniRule"/>
</dbReference>
<dbReference type="FunFam" id="3.30.1370.30:FF:000003">
    <property type="entry name" value="30S ribosomal protein S8"/>
    <property type="match status" value="1"/>
</dbReference>
<dbReference type="FunFam" id="3.30.1490.10:FF:000001">
    <property type="entry name" value="30S ribosomal protein S8"/>
    <property type="match status" value="1"/>
</dbReference>
<dbReference type="Gene3D" id="3.30.1370.30">
    <property type="match status" value="1"/>
</dbReference>
<dbReference type="Gene3D" id="3.30.1490.10">
    <property type="match status" value="1"/>
</dbReference>
<dbReference type="HAMAP" id="MF_01302_B">
    <property type="entry name" value="Ribosomal_uS8_B"/>
    <property type="match status" value="1"/>
</dbReference>
<dbReference type="InterPro" id="IPR000630">
    <property type="entry name" value="Ribosomal_uS8"/>
</dbReference>
<dbReference type="InterPro" id="IPR047863">
    <property type="entry name" value="Ribosomal_uS8_CS"/>
</dbReference>
<dbReference type="InterPro" id="IPR035987">
    <property type="entry name" value="Ribosomal_uS8_sf"/>
</dbReference>
<dbReference type="NCBIfam" id="NF001109">
    <property type="entry name" value="PRK00136.1"/>
    <property type="match status" value="1"/>
</dbReference>
<dbReference type="PANTHER" id="PTHR11758">
    <property type="entry name" value="40S RIBOSOMAL PROTEIN S15A"/>
    <property type="match status" value="1"/>
</dbReference>
<dbReference type="Pfam" id="PF00410">
    <property type="entry name" value="Ribosomal_S8"/>
    <property type="match status" value="1"/>
</dbReference>
<dbReference type="SUPFAM" id="SSF56047">
    <property type="entry name" value="Ribosomal protein S8"/>
    <property type="match status" value="1"/>
</dbReference>
<dbReference type="PROSITE" id="PS00053">
    <property type="entry name" value="RIBOSOMAL_S8"/>
    <property type="match status" value="1"/>
</dbReference>
<comment type="function">
    <text evidence="1">One of the primary rRNA binding proteins, it binds directly to 16S rRNA central domain where it helps coordinate assembly of the platform of the 30S subunit.</text>
</comment>
<comment type="subunit">
    <text evidence="1">Part of the 30S ribosomal subunit. Contacts proteins S5 and S12.</text>
</comment>
<comment type="similarity">
    <text evidence="1">Belongs to the universal ribosomal protein uS8 family.</text>
</comment>
<protein>
    <recommendedName>
        <fullName evidence="1">Small ribosomal subunit protein uS8</fullName>
    </recommendedName>
    <alternativeName>
        <fullName evidence="2">30S ribosomal protein S8</fullName>
    </alternativeName>
</protein>
<reference key="1">
    <citation type="submission" date="2007-03" db="EMBL/GenBank/DDBJ databases">
        <title>Complete sequence of Shewanella loihica PV-4.</title>
        <authorList>
            <consortium name="US DOE Joint Genome Institute"/>
            <person name="Copeland A."/>
            <person name="Lucas S."/>
            <person name="Lapidus A."/>
            <person name="Barry K."/>
            <person name="Detter J.C."/>
            <person name="Glavina del Rio T."/>
            <person name="Hammon N."/>
            <person name="Israni S."/>
            <person name="Dalin E."/>
            <person name="Tice H."/>
            <person name="Pitluck S."/>
            <person name="Chain P."/>
            <person name="Malfatti S."/>
            <person name="Shin M."/>
            <person name="Vergez L."/>
            <person name="Schmutz J."/>
            <person name="Larimer F."/>
            <person name="Land M."/>
            <person name="Hauser L."/>
            <person name="Kyrpides N."/>
            <person name="Mikhailova N."/>
            <person name="Romine M.F."/>
            <person name="Serres G."/>
            <person name="Fredrickson J."/>
            <person name="Tiedje J."/>
            <person name="Richardson P."/>
        </authorList>
    </citation>
    <scope>NUCLEOTIDE SEQUENCE [LARGE SCALE GENOMIC DNA]</scope>
    <source>
        <strain>ATCC BAA-1088 / PV-4</strain>
    </source>
</reference>
<accession>A3Q996</accession>
<keyword id="KW-1185">Reference proteome</keyword>
<keyword id="KW-0687">Ribonucleoprotein</keyword>
<keyword id="KW-0689">Ribosomal protein</keyword>
<keyword id="KW-0694">RNA-binding</keyword>
<keyword id="KW-0699">rRNA-binding</keyword>
<sequence>MSMQDPIADMLTRIRNGQAANKVSVSMPSAKLKVAIAQTLKEEGYITDYTVAGEAKPVLEITLKYFQGQPVVETIQRVSRPGLRIYKGKNDLPKVMGGLGVAIVSTSKGLMTDRAARQQGMGGEVICYVA</sequence>
<organism>
    <name type="scientific">Shewanella loihica (strain ATCC BAA-1088 / PV-4)</name>
    <dbReference type="NCBI Taxonomy" id="323850"/>
    <lineage>
        <taxon>Bacteria</taxon>
        <taxon>Pseudomonadati</taxon>
        <taxon>Pseudomonadota</taxon>
        <taxon>Gammaproteobacteria</taxon>
        <taxon>Alteromonadales</taxon>
        <taxon>Shewanellaceae</taxon>
        <taxon>Shewanella</taxon>
    </lineage>
</organism>
<feature type="chain" id="PRO_0000290928" description="Small ribosomal subunit protein uS8">
    <location>
        <begin position="1"/>
        <end position="130"/>
    </location>
</feature>
<gene>
    <name evidence="1" type="primary">rpsH</name>
    <name type="ordered locus">Shew_0172</name>
</gene>
<evidence type="ECO:0000255" key="1">
    <source>
        <dbReference type="HAMAP-Rule" id="MF_01302"/>
    </source>
</evidence>
<evidence type="ECO:0000305" key="2"/>